<name>PSBI_OENGL</name>
<feature type="chain" id="PRO_0000353242" description="Photosystem II reaction center protein I">
    <location>
        <begin position="1"/>
        <end position="36"/>
    </location>
</feature>
<feature type="transmembrane region" description="Helical" evidence="1">
    <location>
        <begin position="4"/>
        <end position="24"/>
    </location>
</feature>
<accession>B0Z551</accession>
<protein>
    <recommendedName>
        <fullName evidence="1">Photosystem II reaction center protein I</fullName>
        <shortName evidence="1">PSII-I</shortName>
    </recommendedName>
    <alternativeName>
        <fullName evidence="1">PSII 4.8 kDa protein</fullName>
    </alternativeName>
</protein>
<keyword id="KW-0150">Chloroplast</keyword>
<keyword id="KW-0472">Membrane</keyword>
<keyword id="KW-0602">Photosynthesis</keyword>
<keyword id="KW-0604">Photosystem II</keyword>
<keyword id="KW-0934">Plastid</keyword>
<keyword id="KW-0674">Reaction center</keyword>
<keyword id="KW-0793">Thylakoid</keyword>
<keyword id="KW-0812">Transmembrane</keyword>
<keyword id="KW-1133">Transmembrane helix</keyword>
<proteinExistence type="inferred from homology"/>
<organism>
    <name type="scientific">Oenothera glazioviana</name>
    <name type="common">Large-flowered evening primrose</name>
    <name type="synonym">Oenothera erythrosepala</name>
    <dbReference type="NCBI Taxonomy" id="482428"/>
    <lineage>
        <taxon>Eukaryota</taxon>
        <taxon>Viridiplantae</taxon>
        <taxon>Streptophyta</taxon>
        <taxon>Embryophyta</taxon>
        <taxon>Tracheophyta</taxon>
        <taxon>Spermatophyta</taxon>
        <taxon>Magnoliopsida</taxon>
        <taxon>eudicotyledons</taxon>
        <taxon>Gunneridae</taxon>
        <taxon>Pentapetalae</taxon>
        <taxon>rosids</taxon>
        <taxon>malvids</taxon>
        <taxon>Myrtales</taxon>
        <taxon>Onagraceae</taxon>
        <taxon>Onagroideae</taxon>
        <taxon>Onagreae</taxon>
        <taxon>Oenothera</taxon>
    </lineage>
</organism>
<geneLocation type="chloroplast"/>
<dbReference type="EMBL" id="EU262890">
    <property type="protein sequence ID" value="ABX10044.1"/>
    <property type="molecule type" value="Genomic_DNA"/>
</dbReference>
<dbReference type="RefSeq" id="YP_001687290.1">
    <property type="nucleotide sequence ID" value="NC_010360.2"/>
</dbReference>
<dbReference type="SMR" id="B0Z551"/>
<dbReference type="GeneID" id="5955249"/>
<dbReference type="GO" id="GO:0009535">
    <property type="term" value="C:chloroplast thylakoid membrane"/>
    <property type="evidence" value="ECO:0007669"/>
    <property type="project" value="UniProtKB-SubCell"/>
</dbReference>
<dbReference type="GO" id="GO:0009539">
    <property type="term" value="C:photosystem II reaction center"/>
    <property type="evidence" value="ECO:0007669"/>
    <property type="project" value="InterPro"/>
</dbReference>
<dbReference type="GO" id="GO:0015979">
    <property type="term" value="P:photosynthesis"/>
    <property type="evidence" value="ECO:0007669"/>
    <property type="project" value="UniProtKB-UniRule"/>
</dbReference>
<dbReference type="HAMAP" id="MF_01316">
    <property type="entry name" value="PSII_PsbI"/>
    <property type="match status" value="1"/>
</dbReference>
<dbReference type="InterPro" id="IPR003686">
    <property type="entry name" value="PSII_PsbI"/>
</dbReference>
<dbReference type="InterPro" id="IPR037271">
    <property type="entry name" value="PSII_PsbI_sf"/>
</dbReference>
<dbReference type="NCBIfam" id="NF002735">
    <property type="entry name" value="PRK02655.1"/>
    <property type="match status" value="1"/>
</dbReference>
<dbReference type="PANTHER" id="PTHR35772">
    <property type="entry name" value="PHOTOSYSTEM II REACTION CENTER PROTEIN I"/>
    <property type="match status" value="1"/>
</dbReference>
<dbReference type="PANTHER" id="PTHR35772:SF1">
    <property type="entry name" value="PHOTOSYSTEM II REACTION CENTER PROTEIN I"/>
    <property type="match status" value="1"/>
</dbReference>
<dbReference type="Pfam" id="PF02532">
    <property type="entry name" value="PsbI"/>
    <property type="match status" value="1"/>
</dbReference>
<dbReference type="SUPFAM" id="SSF161041">
    <property type="entry name" value="Photosystem II reaction center protein I, PsbI"/>
    <property type="match status" value="1"/>
</dbReference>
<evidence type="ECO:0000255" key="1">
    <source>
        <dbReference type="HAMAP-Rule" id="MF_01316"/>
    </source>
</evidence>
<reference key="1">
    <citation type="journal article" date="2008" name="Nucleic Acids Res.">
        <title>The complete nucleotide sequences of the five genetically distinct plastid genomes of Oenothera, subsection Oenothera: I. Sequence evaluation and plastome evolution.</title>
        <authorList>
            <person name="Greiner S."/>
            <person name="Wang X."/>
            <person name="Rauwolf U."/>
            <person name="Silber M.V."/>
            <person name="Mayer K."/>
            <person name="Meurer J."/>
            <person name="Haberer G."/>
            <person name="Herrmann R.G."/>
        </authorList>
    </citation>
    <scope>NUCLEOTIDE SEQUENCE [LARGE SCALE GENOMIC DNA]</scope>
    <source>
        <strain>cv. Rr-lamarckiana Sweden</strain>
    </source>
</reference>
<gene>
    <name evidence="1" type="primary">psbI</name>
</gene>
<comment type="function">
    <text evidence="1">One of the components of the core complex of photosystem II (PSII), required for its stability and/or assembly. PSII is a light-driven water:plastoquinone oxidoreductase that uses light energy to abstract electrons from H(2)O, generating O(2) and a proton gradient subsequently used for ATP formation. It consists of a core antenna complex that captures photons, and an electron transfer chain that converts photonic excitation into a charge separation.</text>
</comment>
<comment type="subunit">
    <text evidence="1">PSII is composed of 1 copy each of membrane proteins PsbA, PsbB, PsbC, PsbD, PsbE, PsbF, PsbH, PsbI, PsbJ, PsbK, PsbL, PsbM, PsbT, PsbX, PsbY, PsbZ, Psb30/Ycf12, at least 3 peripheral proteins of the oxygen-evolving complex and a large number of cofactors. It forms dimeric complexes.</text>
</comment>
<comment type="subcellular location">
    <subcellularLocation>
        <location evidence="1">Plastid</location>
        <location evidence="1">Chloroplast thylakoid membrane</location>
        <topology evidence="1">Single-pass membrane protein</topology>
    </subcellularLocation>
</comment>
<comment type="similarity">
    <text evidence="1">Belongs to the PsbI family.</text>
</comment>
<sequence>MLTLKLFVYTVVIFFVSLFIFGFLSNDPGRNPGREE</sequence>